<dbReference type="EC" id="3.4.21.91"/>
<dbReference type="EC" id="3.6.1.15"/>
<dbReference type="EC" id="3.6.4.13"/>
<dbReference type="EC" id="2.1.1.56" evidence="17"/>
<dbReference type="EC" id="2.1.1.57" evidence="17"/>
<dbReference type="EC" id="2.7.7.48" evidence="12"/>
<dbReference type="EMBL" id="DQ859056">
    <property type="protein sequence ID" value="ABI54472.1"/>
    <property type="molecule type" value="Genomic_RNA"/>
</dbReference>
<dbReference type="RefSeq" id="YP_009222007.1">
    <property type="nucleotide sequence ID" value="NC_043110.1"/>
</dbReference>
<dbReference type="SMR" id="C8XPA8"/>
<dbReference type="MEROPS" id="S07.001"/>
<dbReference type="GeneID" id="40524942"/>
<dbReference type="KEGG" id="vg:40524942"/>
<dbReference type="Proteomes" id="UP000140353">
    <property type="component" value="Genome"/>
</dbReference>
<dbReference type="GO" id="GO:0005576">
    <property type="term" value="C:extracellular region"/>
    <property type="evidence" value="ECO:0007669"/>
    <property type="project" value="UniProtKB-SubCell"/>
</dbReference>
<dbReference type="GO" id="GO:0044167">
    <property type="term" value="C:host cell endoplasmic reticulum membrane"/>
    <property type="evidence" value="ECO:0007669"/>
    <property type="project" value="UniProtKB-SubCell"/>
</dbReference>
<dbReference type="GO" id="GO:0042025">
    <property type="term" value="C:host cell nucleus"/>
    <property type="evidence" value="ECO:0007669"/>
    <property type="project" value="UniProtKB-SubCell"/>
</dbReference>
<dbReference type="GO" id="GO:0044220">
    <property type="term" value="C:host cell perinuclear region of cytoplasm"/>
    <property type="evidence" value="ECO:0007669"/>
    <property type="project" value="UniProtKB-SubCell"/>
</dbReference>
<dbReference type="GO" id="GO:0016020">
    <property type="term" value="C:membrane"/>
    <property type="evidence" value="ECO:0007669"/>
    <property type="project" value="UniProtKB-KW"/>
</dbReference>
<dbReference type="GO" id="GO:0019028">
    <property type="term" value="C:viral capsid"/>
    <property type="evidence" value="ECO:0007669"/>
    <property type="project" value="UniProtKB-KW"/>
</dbReference>
<dbReference type="GO" id="GO:0055036">
    <property type="term" value="C:virion membrane"/>
    <property type="evidence" value="ECO:0007669"/>
    <property type="project" value="UniProtKB-SubCell"/>
</dbReference>
<dbReference type="GO" id="GO:0005524">
    <property type="term" value="F:ATP binding"/>
    <property type="evidence" value="ECO:0007669"/>
    <property type="project" value="UniProtKB-KW"/>
</dbReference>
<dbReference type="GO" id="GO:0016887">
    <property type="term" value="F:ATP hydrolysis activity"/>
    <property type="evidence" value="ECO:0007669"/>
    <property type="project" value="RHEA"/>
</dbReference>
<dbReference type="GO" id="GO:0003725">
    <property type="term" value="F:double-stranded RNA binding"/>
    <property type="evidence" value="ECO:0007669"/>
    <property type="project" value="InterPro"/>
</dbReference>
<dbReference type="GO" id="GO:0005525">
    <property type="term" value="F:GTP binding"/>
    <property type="evidence" value="ECO:0007669"/>
    <property type="project" value="UniProtKB-KW"/>
</dbReference>
<dbReference type="GO" id="GO:0046872">
    <property type="term" value="F:metal ion binding"/>
    <property type="evidence" value="ECO:0007669"/>
    <property type="project" value="UniProtKB-KW"/>
</dbReference>
<dbReference type="GO" id="GO:0004483">
    <property type="term" value="F:mRNA (nucleoside-2'-O-)-methyltransferase activity"/>
    <property type="evidence" value="ECO:0007669"/>
    <property type="project" value="UniProtKB-EC"/>
</dbReference>
<dbReference type="GO" id="GO:0004482">
    <property type="term" value="F:mRNA 5'-cap (guanine-N7-)-methyltransferase activity"/>
    <property type="evidence" value="ECO:0007669"/>
    <property type="project" value="UniProtKB-EC"/>
</dbReference>
<dbReference type="GO" id="GO:0046983">
    <property type="term" value="F:protein dimerization activity"/>
    <property type="evidence" value="ECO:0007669"/>
    <property type="project" value="InterPro"/>
</dbReference>
<dbReference type="GO" id="GO:0003724">
    <property type="term" value="F:RNA helicase activity"/>
    <property type="evidence" value="ECO:0007669"/>
    <property type="project" value="UniProtKB-EC"/>
</dbReference>
<dbReference type="GO" id="GO:0003968">
    <property type="term" value="F:RNA-directed RNA polymerase activity"/>
    <property type="evidence" value="ECO:0007669"/>
    <property type="project" value="UniProtKB-KW"/>
</dbReference>
<dbReference type="GO" id="GO:0004252">
    <property type="term" value="F:serine-type endopeptidase activity"/>
    <property type="evidence" value="ECO:0007669"/>
    <property type="project" value="InterPro"/>
</dbReference>
<dbReference type="GO" id="GO:0005198">
    <property type="term" value="F:structural molecule activity"/>
    <property type="evidence" value="ECO:0007669"/>
    <property type="project" value="InterPro"/>
</dbReference>
<dbReference type="GO" id="GO:0039654">
    <property type="term" value="P:fusion of virus membrane with host endosome membrane"/>
    <property type="evidence" value="ECO:0007669"/>
    <property type="project" value="UniProtKB-KW"/>
</dbReference>
<dbReference type="GO" id="GO:0006508">
    <property type="term" value="P:proteolysis"/>
    <property type="evidence" value="ECO:0007669"/>
    <property type="project" value="UniProtKB-KW"/>
</dbReference>
<dbReference type="GO" id="GO:0046718">
    <property type="term" value="P:symbiont entry into host cell"/>
    <property type="evidence" value="ECO:0007669"/>
    <property type="project" value="UniProtKB-KW"/>
</dbReference>
<dbReference type="GO" id="GO:0039520">
    <property type="term" value="P:symbiont-mediated activation of host autophagy"/>
    <property type="evidence" value="ECO:0007669"/>
    <property type="project" value="UniProtKB-KW"/>
</dbReference>
<dbReference type="GO" id="GO:0052170">
    <property type="term" value="P:symbiont-mediated suppression of host innate immune response"/>
    <property type="evidence" value="ECO:0007669"/>
    <property type="project" value="UniProtKB-KW"/>
</dbReference>
<dbReference type="GO" id="GO:0039563">
    <property type="term" value="P:symbiont-mediated suppression of host JAK-STAT cascade via inhibition of STAT1 activity"/>
    <property type="evidence" value="ECO:0007669"/>
    <property type="project" value="UniProtKB-KW"/>
</dbReference>
<dbReference type="GO" id="GO:0039564">
    <property type="term" value="P:symbiont-mediated suppression of host JAK-STAT cascade via inhibition of STAT2 activity"/>
    <property type="evidence" value="ECO:0007669"/>
    <property type="project" value="UniProtKB-KW"/>
</dbReference>
<dbReference type="GO" id="GO:0039502">
    <property type="term" value="P:symbiont-mediated suppression of host type I interferon-mediated signaling pathway"/>
    <property type="evidence" value="ECO:0007669"/>
    <property type="project" value="UniProtKB-KW"/>
</dbReference>
<dbReference type="GO" id="GO:0039694">
    <property type="term" value="P:viral RNA genome replication"/>
    <property type="evidence" value="ECO:0007669"/>
    <property type="project" value="InterPro"/>
</dbReference>
<dbReference type="GO" id="GO:0019062">
    <property type="term" value="P:virion attachment to host cell"/>
    <property type="evidence" value="ECO:0007669"/>
    <property type="project" value="UniProtKB-KW"/>
</dbReference>
<dbReference type="CDD" id="cd20761">
    <property type="entry name" value="capping_2-OMTase_Flaviviridae"/>
    <property type="match status" value="1"/>
</dbReference>
<dbReference type="CDD" id="cd17931">
    <property type="entry name" value="DEXHc_viral_Ns3"/>
    <property type="match status" value="1"/>
</dbReference>
<dbReference type="CDD" id="cd12149">
    <property type="entry name" value="Flavi_E_C"/>
    <property type="match status" value="1"/>
</dbReference>
<dbReference type="CDD" id="cd17038">
    <property type="entry name" value="Flavi_M"/>
    <property type="match status" value="1"/>
</dbReference>
<dbReference type="CDD" id="cd23204">
    <property type="entry name" value="Flavivirus_RdRp"/>
    <property type="match status" value="1"/>
</dbReference>
<dbReference type="FunFam" id="3.30.70.2840:FF:000004">
    <property type="entry name" value="Genome polyprotein"/>
    <property type="match status" value="1"/>
</dbReference>
<dbReference type="Gene3D" id="1.10.260.90">
    <property type="match status" value="1"/>
</dbReference>
<dbReference type="Gene3D" id="1.20.1280.260">
    <property type="match status" value="1"/>
</dbReference>
<dbReference type="Gene3D" id="2.40.10.120">
    <property type="match status" value="2"/>
</dbReference>
<dbReference type="Gene3D" id="2.60.40.350">
    <property type="match status" value="1"/>
</dbReference>
<dbReference type="Gene3D" id="1.10.8.970">
    <property type="entry name" value="Flavivirus envelope glycoprotein M-like"/>
    <property type="match status" value="1"/>
</dbReference>
<dbReference type="Gene3D" id="2.60.260.50">
    <property type="entry name" value="Flavivirus polyprotein propeptide domain"/>
    <property type="match status" value="1"/>
</dbReference>
<dbReference type="Gene3D" id="3.30.70.2840">
    <property type="entry name" value="Flavivirus RNA-directed RNA polymerase, thumb domain"/>
    <property type="match status" value="3"/>
</dbReference>
<dbReference type="Gene3D" id="3.40.50.300">
    <property type="entry name" value="P-loop containing nucleotide triphosphate hydrolases"/>
    <property type="match status" value="2"/>
</dbReference>
<dbReference type="Gene3D" id="2.60.98.10">
    <property type="entry name" value="Tick-borne Encephalitis virus Glycoprotein, domain 1"/>
    <property type="match status" value="1"/>
</dbReference>
<dbReference type="Gene3D" id="2.40.10.10">
    <property type="entry name" value="Trypsin-like serine proteases"/>
    <property type="match status" value="1"/>
</dbReference>
<dbReference type="Gene3D" id="3.40.50.150">
    <property type="entry name" value="Vaccinia Virus protein VP39"/>
    <property type="match status" value="1"/>
</dbReference>
<dbReference type="Gene3D" id="3.30.67.10">
    <property type="entry name" value="Viral Envelope Glycoprotein, domain 2"/>
    <property type="match status" value="1"/>
</dbReference>
<dbReference type="Gene3D" id="3.30.387.10">
    <property type="entry name" value="Viral Envelope Glycoprotein, domain 3"/>
    <property type="match status" value="1"/>
</dbReference>
<dbReference type="InterPro" id="IPR043502">
    <property type="entry name" value="DNA/RNA_pol_sf"/>
</dbReference>
<dbReference type="InterPro" id="IPR000069">
    <property type="entry name" value="Env_glycoprot_M_flavivir"/>
</dbReference>
<dbReference type="InterPro" id="IPR038302">
    <property type="entry name" value="Env_glycoprot_M_sf_flavivir"/>
</dbReference>
<dbReference type="InterPro" id="IPR013755">
    <property type="entry name" value="Flav_gly_cen_dom_subdom1"/>
</dbReference>
<dbReference type="InterPro" id="IPR001122">
    <property type="entry name" value="Flavi_capsidC"/>
</dbReference>
<dbReference type="InterPro" id="IPR011492">
    <property type="entry name" value="Flavi_DEAD"/>
</dbReference>
<dbReference type="InterPro" id="IPR027287">
    <property type="entry name" value="Flavi_E_Ig-like"/>
</dbReference>
<dbReference type="InterPro" id="IPR026470">
    <property type="entry name" value="Flavi_E_Stem/Anchor_dom"/>
</dbReference>
<dbReference type="InterPro" id="IPR038345">
    <property type="entry name" value="Flavi_E_Stem/Anchor_dom_sf"/>
</dbReference>
<dbReference type="InterPro" id="IPR011998">
    <property type="entry name" value="Flavi_Glycoprot_E_cen/dimer"/>
</dbReference>
<dbReference type="InterPro" id="IPR001157">
    <property type="entry name" value="Flavi_NS1"/>
</dbReference>
<dbReference type="InterPro" id="IPR000752">
    <property type="entry name" value="Flavi_NS2A"/>
</dbReference>
<dbReference type="InterPro" id="IPR000487">
    <property type="entry name" value="Flavi_NS2B"/>
</dbReference>
<dbReference type="InterPro" id="IPR001850">
    <property type="entry name" value="Flavi_NS3_S7"/>
</dbReference>
<dbReference type="InterPro" id="IPR000404">
    <property type="entry name" value="Flavi_NS4A"/>
</dbReference>
<dbReference type="InterPro" id="IPR001528">
    <property type="entry name" value="Flavi_NS4B"/>
</dbReference>
<dbReference type="InterPro" id="IPR046811">
    <property type="entry name" value="Flavi_NS5_thumb"/>
</dbReference>
<dbReference type="InterPro" id="IPR002535">
    <property type="entry name" value="Flavi_propep"/>
</dbReference>
<dbReference type="InterPro" id="IPR038688">
    <property type="entry name" value="Flavi_propep_sf"/>
</dbReference>
<dbReference type="InterPro" id="IPR047530">
    <property type="entry name" value="Flavi_RdRp"/>
</dbReference>
<dbReference type="InterPro" id="IPR000208">
    <property type="entry name" value="Flavi_RdRp_fingers/palm"/>
</dbReference>
<dbReference type="InterPro" id="IPR000336">
    <property type="entry name" value="Flavivir/Alphavir_Ig-like_sf"/>
</dbReference>
<dbReference type="InterPro" id="IPR014412">
    <property type="entry name" value="Gen_Poly_FLV"/>
</dbReference>
<dbReference type="InterPro" id="IPR036253">
    <property type="entry name" value="Glycoprot_cen/dimer_sf"/>
</dbReference>
<dbReference type="InterPro" id="IPR038055">
    <property type="entry name" value="Glycoprot_E_dimer_dom"/>
</dbReference>
<dbReference type="InterPro" id="IPR013756">
    <property type="entry name" value="GlyE_cen_dom_subdom2"/>
</dbReference>
<dbReference type="InterPro" id="IPR014001">
    <property type="entry name" value="Helicase_ATP-bd"/>
</dbReference>
<dbReference type="InterPro" id="IPR001650">
    <property type="entry name" value="Helicase_C-like"/>
</dbReference>
<dbReference type="InterPro" id="IPR014756">
    <property type="entry name" value="Ig_E-set"/>
</dbReference>
<dbReference type="InterPro" id="IPR026490">
    <property type="entry name" value="mRNA_cap_0/1_MeTrfase"/>
</dbReference>
<dbReference type="InterPro" id="IPR049486">
    <property type="entry name" value="NS3-hel_C_flaviviridae"/>
</dbReference>
<dbReference type="InterPro" id="IPR027417">
    <property type="entry name" value="P-loop_NTPase"/>
</dbReference>
<dbReference type="InterPro" id="IPR009003">
    <property type="entry name" value="Peptidase_S1_PA"/>
</dbReference>
<dbReference type="InterPro" id="IPR043504">
    <property type="entry name" value="Peptidase_S1_PA_chymotrypsin"/>
</dbReference>
<dbReference type="InterPro" id="IPR007094">
    <property type="entry name" value="RNA-dir_pol_PSvirus"/>
</dbReference>
<dbReference type="InterPro" id="IPR002877">
    <property type="entry name" value="RNA_MeTrfase_FtsJ_dom"/>
</dbReference>
<dbReference type="InterPro" id="IPR029063">
    <property type="entry name" value="SAM-dependent_MTases_sf"/>
</dbReference>
<dbReference type="NCBIfam" id="TIGR04240">
    <property type="entry name" value="flavi_E_stem"/>
    <property type="match status" value="1"/>
</dbReference>
<dbReference type="Pfam" id="PF20907">
    <property type="entry name" value="Flav_NS3-hel_C"/>
    <property type="match status" value="1"/>
</dbReference>
<dbReference type="Pfam" id="PF01003">
    <property type="entry name" value="Flavi_capsid"/>
    <property type="match status" value="1"/>
</dbReference>
<dbReference type="Pfam" id="PF07652">
    <property type="entry name" value="Flavi_DEAD"/>
    <property type="match status" value="1"/>
</dbReference>
<dbReference type="Pfam" id="PF21659">
    <property type="entry name" value="Flavi_E_stem"/>
    <property type="match status" value="1"/>
</dbReference>
<dbReference type="Pfam" id="PF02832">
    <property type="entry name" value="Flavi_glycop_C"/>
    <property type="match status" value="1"/>
</dbReference>
<dbReference type="Pfam" id="PF00869">
    <property type="entry name" value="Flavi_glycoprot"/>
    <property type="match status" value="1"/>
</dbReference>
<dbReference type="Pfam" id="PF01004">
    <property type="entry name" value="Flavi_M"/>
    <property type="match status" value="1"/>
</dbReference>
<dbReference type="Pfam" id="PF00948">
    <property type="entry name" value="Flavi_NS1"/>
    <property type="match status" value="1"/>
</dbReference>
<dbReference type="Pfam" id="PF01005">
    <property type="entry name" value="Flavi_NS2A"/>
    <property type="match status" value="1"/>
</dbReference>
<dbReference type="Pfam" id="PF01002">
    <property type="entry name" value="Flavi_NS2B"/>
    <property type="match status" value="1"/>
</dbReference>
<dbReference type="Pfam" id="PF01350">
    <property type="entry name" value="Flavi_NS4A"/>
    <property type="match status" value="1"/>
</dbReference>
<dbReference type="Pfam" id="PF01349">
    <property type="entry name" value="Flavi_NS4B"/>
    <property type="match status" value="1"/>
</dbReference>
<dbReference type="Pfam" id="PF00972">
    <property type="entry name" value="Flavi_NS5"/>
    <property type="match status" value="1"/>
</dbReference>
<dbReference type="Pfam" id="PF20483">
    <property type="entry name" value="Flavi_NS5_thumb"/>
    <property type="match status" value="1"/>
</dbReference>
<dbReference type="Pfam" id="PF01570">
    <property type="entry name" value="Flavi_propep"/>
    <property type="match status" value="1"/>
</dbReference>
<dbReference type="Pfam" id="PF01728">
    <property type="entry name" value="FtsJ"/>
    <property type="match status" value="1"/>
</dbReference>
<dbReference type="Pfam" id="PF00949">
    <property type="entry name" value="Peptidase_S7"/>
    <property type="match status" value="1"/>
</dbReference>
<dbReference type="PIRSF" id="PIRSF003817">
    <property type="entry name" value="Gen_Poly_FLV"/>
    <property type="match status" value="1"/>
</dbReference>
<dbReference type="SMART" id="SM00487">
    <property type="entry name" value="DEXDc"/>
    <property type="match status" value="1"/>
</dbReference>
<dbReference type="SMART" id="SM00490">
    <property type="entry name" value="HELICc"/>
    <property type="match status" value="1"/>
</dbReference>
<dbReference type="SUPFAM" id="SSF56672">
    <property type="entry name" value="DNA/RNA polymerases"/>
    <property type="match status" value="1"/>
</dbReference>
<dbReference type="SUPFAM" id="SSF81296">
    <property type="entry name" value="E set domains"/>
    <property type="match status" value="1"/>
</dbReference>
<dbReference type="SUPFAM" id="SSF52540">
    <property type="entry name" value="P-loop containing nucleoside triphosphate hydrolases"/>
    <property type="match status" value="2"/>
</dbReference>
<dbReference type="SUPFAM" id="SSF53335">
    <property type="entry name" value="S-adenosyl-L-methionine-dependent methyltransferases"/>
    <property type="match status" value="1"/>
</dbReference>
<dbReference type="SUPFAM" id="SSF50494">
    <property type="entry name" value="Trypsin-like serine proteases"/>
    <property type="match status" value="1"/>
</dbReference>
<dbReference type="SUPFAM" id="SSF56983">
    <property type="entry name" value="Viral glycoprotein, central and dimerisation domains"/>
    <property type="match status" value="1"/>
</dbReference>
<dbReference type="PROSITE" id="PS51527">
    <property type="entry name" value="FLAVIVIRUS_NS2B"/>
    <property type="match status" value="1"/>
</dbReference>
<dbReference type="PROSITE" id="PS51528">
    <property type="entry name" value="FLAVIVIRUS_NS3PRO"/>
    <property type="match status" value="1"/>
</dbReference>
<dbReference type="PROSITE" id="PS51192">
    <property type="entry name" value="HELICASE_ATP_BIND_1"/>
    <property type="match status" value="1"/>
</dbReference>
<dbReference type="PROSITE" id="PS51194">
    <property type="entry name" value="HELICASE_CTER"/>
    <property type="match status" value="1"/>
</dbReference>
<dbReference type="PROSITE" id="PS50507">
    <property type="entry name" value="RDRP_SSRNA_POS"/>
    <property type="match status" value="1"/>
</dbReference>
<dbReference type="PROSITE" id="PS51591">
    <property type="entry name" value="RNA_CAP01_NS5_MT"/>
    <property type="match status" value="1"/>
</dbReference>
<keyword id="KW-1072">Activation of host autophagy by virus</keyword>
<keyword id="KW-0067">ATP-binding</keyword>
<keyword id="KW-0167">Capsid protein</keyword>
<keyword id="KW-0165">Cleavage on pair of basic residues</keyword>
<keyword id="KW-1015">Disulfide bond</keyword>
<keyword id="KW-1170">Fusion of virus membrane with host endosomal membrane</keyword>
<keyword id="KW-1168">Fusion of virus membrane with host membrane</keyword>
<keyword id="KW-0325">Glycoprotein</keyword>
<keyword id="KW-0342">GTP-binding</keyword>
<keyword id="KW-0347">Helicase</keyword>
<keyword id="KW-1035">Host cytoplasm</keyword>
<keyword id="KW-1038">Host endoplasmic reticulum</keyword>
<keyword id="KW-1043">Host membrane</keyword>
<keyword id="KW-1048">Host nucleus</keyword>
<keyword id="KW-0945">Host-virus interaction</keyword>
<keyword id="KW-0378">Hydrolase</keyword>
<keyword id="KW-1090">Inhibition of host innate immune response by virus</keyword>
<keyword id="KW-1114">Inhibition of host interferon signaling pathway by virus</keyword>
<keyword id="KW-1105">Inhibition of host STAT1 by virus</keyword>
<keyword id="KW-1106">Inhibition of host STAT2 by virus</keyword>
<keyword id="KW-0922">Interferon antiviral system evasion</keyword>
<keyword id="KW-0472">Membrane</keyword>
<keyword id="KW-0479">Metal-binding</keyword>
<keyword id="KW-0489">Methyltransferase</keyword>
<keyword id="KW-0506">mRNA capping</keyword>
<keyword id="KW-0507">mRNA processing</keyword>
<keyword id="KW-0547">Nucleotide-binding</keyword>
<keyword id="KW-0548">Nucleotidyltransferase</keyword>
<keyword id="KW-0597">Phosphoprotein</keyword>
<keyword id="KW-0645">Protease</keyword>
<keyword id="KW-0694">RNA-binding</keyword>
<keyword id="KW-0696">RNA-directed RNA polymerase</keyword>
<keyword id="KW-0949">S-adenosyl-L-methionine</keyword>
<keyword id="KW-0964">Secreted</keyword>
<keyword id="KW-0720">Serine protease</keyword>
<keyword id="KW-0941">Suppressor of RNA silencing</keyword>
<keyword id="KW-0808">Transferase</keyword>
<keyword id="KW-0812">Transmembrane</keyword>
<keyword id="KW-1133">Transmembrane helix</keyword>
<keyword id="KW-0832">Ubl conjugation</keyword>
<keyword id="KW-1161">Viral attachment to host cell</keyword>
<keyword id="KW-0899">Viral immunoevasion</keyword>
<keyword id="KW-1162">Viral penetration into host cytoplasm</keyword>
<keyword id="KW-0693">Viral RNA replication</keyword>
<keyword id="KW-0946">Virion</keyword>
<keyword id="KW-1160">Virus entry into host cell</keyword>
<keyword id="KW-0862">Zinc</keyword>
<organism>
    <name type="scientific">Banzi virus</name>
    <name type="common">BANV</name>
    <dbReference type="NCBI Taxonomy" id="38837"/>
    <lineage>
        <taxon>Viruses</taxon>
        <taxon>Riboviria</taxon>
        <taxon>Orthornavirae</taxon>
        <taxon>Kitrinoviricota</taxon>
        <taxon>Flasuviricetes</taxon>
        <taxon>Amarillovirales</taxon>
        <taxon>Flaviviridae</taxon>
        <taxon>Orthoflavivirus</taxon>
        <taxon>Orthoflavivirus banziense</taxon>
    </lineage>
</organism>
<name>POLG_BANV</name>
<comment type="function">
    <molecule>Capsid protein C</molecule>
    <text evidence="7">Plays a role in virus budding by binding to the cell membrane and gathering the viral RNA into a nucleocapsid that forms the core of a mature virus particle. During virus entry, may induce genome penetration into the host cytoplasm after hemifusion induced by the surface proteins. Can migrate to the cell nucleus where it modulates host functions.</text>
</comment>
<comment type="function">
    <molecule>Capsid protein C</molecule>
    <text evidence="2">Inhibits RNA silencing by interfering with host Dicer.</text>
</comment>
<comment type="function">
    <molecule>Peptide pr</molecule>
    <text evidence="7">Prevents premature fusion activity of envelope proteins in trans-Golgi by binding to envelope protein E at pH6.0. After virion release in extracellular space, gets dissociated from E dimers.</text>
</comment>
<comment type="function">
    <molecule>Protein prM</molecule>
    <text evidence="7">Acts as a chaperone for envelope protein E during intracellular virion assembly by masking and inactivating envelope protein E fusion peptide. prM is the only viral peptide matured by host furin in the trans-Golgi network probably to avoid catastrophic activation of the viral fusion activity in acidic Golgi compartment prior to virion release. prM-E cleavage is inefficient, and many virions are only partially matured. These uncleaved prM would play a role in immune evasion.</text>
</comment>
<comment type="function">
    <molecule>Small envelope protein M</molecule>
    <text evidence="7">May play a role in virus budding. Exerts cytotoxic effects by activating a mitochondrial apoptotic pathway through M ectodomain. May display a viroporin activity.</text>
</comment>
<comment type="function">
    <molecule>Envelope protein E</molecule>
    <text evidence="7">Binds to host cell surface receptor and mediates fusion between viral and cellular membranes. Envelope protein is synthesized in the endoplasmic reticulum in the form of heterodimer with protein prM. They play a role in virion budding in the ER, and the newly formed immature particle is covered with 60 spikes composed of heterodimer between precursor prM and envelope protein E. The virion is transported to the Golgi apparatus where the low pH causes dissociation of PrM-E heterodimers and formation of E homodimers. prM-E cleavage is inefficient, and many virions are only partially matured. These uncleaved prM would play a role in immune evasion.</text>
</comment>
<comment type="function">
    <molecule>Non-structural protein 1</molecule>
    <text evidence="10">Involved in immune evasion, pathogenesis and viral replication. Once cleaved off the polyprotein, is targeted to three destinations: the viral replication cycle, the plasma membrane and the extracellular compartment. Essential for viral replication. Required for formation of the replication complex and recruitment of other non-structural proteins to the ER-derived membrane structures. Excreted as a hexameric lipoparticle that plays a role against host immune response. Antagonizing the complement function. Binds to the host macrophages and dendritic cells. Inhibits signal transduction originating from Toll-like receptor 3 (TLR3).</text>
</comment>
<comment type="function">
    <molecule>Non-structural protein 2A</molecule>
    <text evidence="7">Component of the viral RNA replication complex that functions in virion assembly and antagonizes the host immune response.</text>
</comment>
<comment type="function">
    <molecule>Serine protease subunit NS2B</molecule>
    <text evidence="7 15">Required cofactor for the serine protease function of NS3. May have membrane-destabilizing activity and form viroporins (By similarity).</text>
</comment>
<comment type="function">
    <molecule>Serine protease NS3</molecule>
    <text evidence="2 16">Displays three enzymatic activities: serine protease, NTPase and RNA helicase. NS3 serine protease, in association with NS2B, performs its autocleavage and cleaves the polyprotein at dibasic sites in the cytoplasm: C-prM, NS2A-NS2B, NS2B-NS3, NS3-NS4A, NS4A-2K and NS4B-NS5. NS3 RNA helicase binds RNA and unwinds dsRNA in the 3' to 5' direction. Also plays a role in virus assembly (By similarity).</text>
</comment>
<comment type="function">
    <molecule>Non-structural protein 4A</molecule>
    <text evidence="10">Regulates the ATPase activity of the NS3 helicase activity. NS4A allows NS3 helicase to conserve energy during unwinding.</text>
</comment>
<comment type="function">
    <molecule>Peptide 2k</molecule>
    <text evidence="7">Functions as a signal peptide for NS4B and is required for the interferon antagonism activity of the latter.</text>
</comment>
<comment type="function">
    <molecule>Non-structural protein 4B</molecule>
    <text evidence="10">Induces the formation of ER-derived membrane vesicles where the viral replication takes place. Inhibits interferon (IFN)-induced host STAT1 phosphorylation and nuclear translocation, thereby preventing the establishment of cellular antiviral state by blocking the IFN-alpha/beta pathway.</text>
</comment>
<comment type="function">
    <molecule>RNA-directed RNA polymerase NS5</molecule>
    <text evidence="2">Replicates the viral (+) and (-) RNA genome, and performs the capping of genomes in the cytoplasm. NS5 methylates viral RNA cap at guanine N-7 and ribose 2'-O positions (By similarity). Besides its role in RNA genome replication, also prevents the establishment of cellular antiviral state by blocking the interferon-alpha/beta (IFN-alpha/beta) signaling pathway. IFN-I induces binding of NS5 to host IFN-activated transcription factor STAT2, preventing its transcriptional activity. Host TRIM23 is the E3 ligase that interacts with and polyubiquitinates NS5 to promote its binding to STAT2 and trigger IFN-I signaling inhibition.</text>
</comment>
<comment type="catalytic activity">
    <reaction>
        <text>Selective hydrolysis of -Xaa-Xaa-|-Yaa- bonds in which each of the Xaa can be either Arg or Lys and Yaa can be either Ser or Ala.</text>
        <dbReference type="EC" id="3.4.21.91"/>
    </reaction>
</comment>
<comment type="catalytic activity">
    <reaction evidence="12">
        <text>RNA(n) + a ribonucleoside 5'-triphosphate = RNA(n+1) + diphosphate</text>
        <dbReference type="Rhea" id="RHEA:21248"/>
        <dbReference type="Rhea" id="RHEA-COMP:14527"/>
        <dbReference type="Rhea" id="RHEA-COMP:17342"/>
        <dbReference type="ChEBI" id="CHEBI:33019"/>
        <dbReference type="ChEBI" id="CHEBI:61557"/>
        <dbReference type="ChEBI" id="CHEBI:140395"/>
        <dbReference type="EC" id="2.7.7.48"/>
    </reaction>
</comment>
<comment type="catalytic activity">
    <reaction>
        <text>a ribonucleoside 5'-triphosphate + H2O = a ribonucleoside 5'-diphosphate + phosphate + H(+)</text>
        <dbReference type="Rhea" id="RHEA:23680"/>
        <dbReference type="ChEBI" id="CHEBI:15377"/>
        <dbReference type="ChEBI" id="CHEBI:15378"/>
        <dbReference type="ChEBI" id="CHEBI:43474"/>
        <dbReference type="ChEBI" id="CHEBI:57930"/>
        <dbReference type="ChEBI" id="CHEBI:61557"/>
        <dbReference type="EC" id="3.6.1.15"/>
    </reaction>
</comment>
<comment type="catalytic activity">
    <reaction>
        <text>ATP + H2O = ADP + phosphate + H(+)</text>
        <dbReference type="Rhea" id="RHEA:13065"/>
        <dbReference type="ChEBI" id="CHEBI:15377"/>
        <dbReference type="ChEBI" id="CHEBI:15378"/>
        <dbReference type="ChEBI" id="CHEBI:30616"/>
        <dbReference type="ChEBI" id="CHEBI:43474"/>
        <dbReference type="ChEBI" id="CHEBI:456216"/>
        <dbReference type="EC" id="3.6.4.13"/>
    </reaction>
</comment>
<comment type="catalytic activity">
    <reaction evidence="17">
        <text>a 5'-end (5'-triphosphoguanosine)-ribonucleoside in mRNA + S-adenosyl-L-methionine = a 5'-end (N(7)-methyl 5'-triphosphoguanosine)-ribonucleoside in mRNA + S-adenosyl-L-homocysteine</text>
        <dbReference type="Rhea" id="RHEA:67008"/>
        <dbReference type="Rhea" id="RHEA-COMP:17166"/>
        <dbReference type="Rhea" id="RHEA-COMP:17167"/>
        <dbReference type="ChEBI" id="CHEBI:57856"/>
        <dbReference type="ChEBI" id="CHEBI:59789"/>
        <dbReference type="ChEBI" id="CHEBI:156461"/>
        <dbReference type="ChEBI" id="CHEBI:167617"/>
        <dbReference type="EC" id="2.1.1.56"/>
    </reaction>
</comment>
<comment type="catalytic activity">
    <reaction evidence="17">
        <text>a 5'-end (N(7)-methyl 5'-triphosphoguanosine)-ribonucleoside in mRNA + S-adenosyl-L-methionine = a 5'-end (N(7)-methyl 5'-triphosphoguanosine)-(2'-O-methyl-ribonucleoside) in mRNA + S-adenosyl-L-homocysteine + H(+)</text>
        <dbReference type="Rhea" id="RHEA:67020"/>
        <dbReference type="Rhea" id="RHEA-COMP:17167"/>
        <dbReference type="Rhea" id="RHEA-COMP:17168"/>
        <dbReference type="ChEBI" id="CHEBI:15378"/>
        <dbReference type="ChEBI" id="CHEBI:57856"/>
        <dbReference type="ChEBI" id="CHEBI:59789"/>
        <dbReference type="ChEBI" id="CHEBI:156461"/>
        <dbReference type="ChEBI" id="CHEBI:167609"/>
        <dbReference type="EC" id="2.1.1.57"/>
    </reaction>
</comment>
<comment type="subunit">
    <molecule>Capsid protein C</molecule>
    <text evidence="2">Homodimer. Interacts (via N-terminus) with host EXOC1 (via C-terminus); this interaction results in EXOC1 degradation through the proteasome degradation pathway.</text>
</comment>
<comment type="subunit">
    <molecule>Protein prM</molecule>
    <text evidence="2">Forms heterodimers with envelope protein E in the endoplasmic reticulum and Golgi.</text>
</comment>
<comment type="subunit">
    <molecule>Envelope protein E</molecule>
    <text evidence="2">Homodimer; in the endoplasmic reticulum and Golgi. Interacts with protein prM. Interacts with non-structural protein 1.</text>
</comment>
<comment type="subunit">
    <molecule>Non-structural protein 1</molecule>
    <text evidence="2">Homodimer; Homohexamer when secreted. Interacts with envelope protein E.</text>
</comment>
<comment type="subunit">
    <molecule>Non-structural protein 2A</molecule>
    <text evidence="2">Interacts (via N-terminus) with serine protease NS3.</text>
</comment>
<comment type="subunit">
    <molecule>Serine protease subunit NS2B</molecule>
    <text evidence="2">Forms a heterodimer with serine protease NS3. May form homooligomers.</text>
</comment>
<comment type="subunit">
    <molecule>Serine protease NS3</molecule>
    <text evidence="2">Forms a heterodimer with NS2B. Interacts with non-structural protein 2A (via N-terminus). Interacts with NS4B. Interacts with unphosphorylated RNA-directed RNA polymerase NS5; this interaction stimulates RNA-directed RNA polymerase NS5 guanylyltransferase activity. NS3 interacts with host PDCD6IP; this interaction contributes to virion release.</text>
</comment>
<comment type="subunit">
    <molecule>Non-structural protein 4B</molecule>
    <text evidence="2">Interacts with serine protease NS3.</text>
</comment>
<comment type="subunit">
    <molecule>RNA-directed RNA polymerase NS5</molecule>
    <text evidence="2">Homodimer. Interacts with host STAT2; this interaction prevents the establishment of cellular antiviral state. Interacts with host TRIM23; this interaction leads to NS5 ubiquitination.</text>
</comment>
<comment type="subcellular location">
    <molecule>Capsid protein C</molecule>
    <subcellularLocation>
        <location evidence="7">Virion</location>
    </subcellularLocation>
    <subcellularLocation>
        <location evidence="7">Host nucleus</location>
    </subcellularLocation>
    <subcellularLocation>
        <location evidence="7">Host cytoplasm</location>
        <location evidence="7">Host perinuclear region</location>
    </subcellularLocation>
    <subcellularLocation>
        <location evidence="7">Host cytoplasm</location>
    </subcellularLocation>
</comment>
<comment type="subcellular location">
    <molecule>Peptide pr</molecule>
    <subcellularLocation>
        <location evidence="7">Secreted</location>
    </subcellularLocation>
</comment>
<comment type="subcellular location">
    <molecule>Small envelope protein M</molecule>
    <subcellularLocation>
        <location evidence="2">Virion membrane</location>
        <topology evidence="2">Multi-pass membrane protein</topology>
    </subcellularLocation>
    <subcellularLocation>
        <location evidence="2">Host endoplasmic reticulum membrane</location>
        <topology evidence="11">Multi-pass membrane protein</topology>
    </subcellularLocation>
    <text evidence="2">ER membrane retention is mediated by the transmembrane domains.</text>
</comment>
<comment type="subcellular location">
    <molecule>Envelope protein E</molecule>
    <subcellularLocation>
        <location evidence="18">Virion membrane</location>
        <topology evidence="2">Multi-pass membrane protein</topology>
    </subcellularLocation>
    <subcellularLocation>
        <location evidence="2">Host endoplasmic reticulum membrane</location>
        <topology evidence="11">Multi-pass membrane protein</topology>
    </subcellularLocation>
    <text evidence="2">ER membrane retention is mediated by the transmembrane domains.</text>
</comment>
<comment type="subcellular location">
    <molecule>Non-structural protein 1</molecule>
    <subcellularLocation>
        <location evidence="7">Secreted</location>
    </subcellularLocation>
    <subcellularLocation>
        <location>Host endoplasmic reticulum membrane</location>
        <topology>Peripheral membrane protein</topology>
        <orientation evidence="7">Lumenal side</orientation>
    </subcellularLocation>
    <text evidence="10">Located in RE-derived vesicles hosting the replication complex.</text>
</comment>
<comment type="subcellular location">
    <molecule>Non-structural protein 2A</molecule>
    <subcellularLocation>
        <location evidence="7">Host endoplasmic reticulum membrane</location>
        <topology evidence="7">Multi-pass membrane protein</topology>
    </subcellularLocation>
</comment>
<comment type="subcellular location">
    <molecule>Serine protease subunit NS2B</molecule>
    <subcellularLocation>
        <location>Host endoplasmic reticulum membrane</location>
        <topology evidence="7">Multi-pass membrane protein</topology>
    </subcellularLocation>
</comment>
<comment type="subcellular location">
    <molecule>Serine protease NS3</molecule>
    <subcellularLocation>
        <location evidence="16">Host endoplasmic reticulum membrane</location>
        <topology evidence="16">Peripheral membrane protein</topology>
        <orientation evidence="16">Cytoplasmic side</orientation>
    </subcellularLocation>
    <text evidence="16">Remains non-covalently associated to serine protease subunit NS2B.</text>
</comment>
<comment type="subcellular location">
    <molecule>Non-structural protein 4A</molecule>
    <subcellularLocation>
        <location evidence="7">Host endoplasmic reticulum membrane</location>
        <topology evidence="7">Multi-pass membrane protein</topology>
    </subcellularLocation>
    <text evidence="7">Located in RE-associated vesicles hosting the replication complex.</text>
</comment>
<comment type="subcellular location">
    <molecule>Non-structural protein 4B</molecule>
    <subcellularLocation>
        <location evidence="7">Host endoplasmic reticulum membrane</location>
        <topology evidence="7">Multi-pass membrane protein</topology>
    </subcellularLocation>
    <text evidence="10">Located in RE-derived vesicles hosting the replication complex.</text>
</comment>
<comment type="subcellular location">
    <molecule>RNA-directed RNA polymerase NS5</molecule>
    <subcellularLocation>
        <location>Host endoplasmic reticulum membrane</location>
        <topology>Peripheral membrane protein</topology>
        <orientation>Cytoplasmic side</orientation>
    </subcellularLocation>
    <subcellularLocation>
        <location evidence="7">Host nucleus</location>
    </subcellularLocation>
    <text evidence="7">Located in RE-associated vesicles hosting the replication complex. NS5 protein is mainly localized in the nucleus rather than in ER vesicles.</text>
</comment>
<comment type="domain">
    <text evidence="7">The transmembrane domains of the small envelope protein M and envelope protein E contain an endoplasmic reticulum retention signal.</text>
</comment>
<comment type="PTM">
    <molecule>Genome polyprotein</molecule>
    <text evidence="2">Specific enzymatic cleavages in vivo yield mature proteins. The nascent capsid protein C contains a C-terminal hydrophobic domain that act as a signal sequence for translocation of prM into the lumen of the ER. Mature capsid protein C is cleaved at a site upstream of this hydrophobic domain by NS3. prM is cleaved in post-Golgi vesicles by a host furin, releasing the mature small envelope protein M, and peptide pr. Non-structural protein 2A-alpha, a C-terminally truncated form of non-structural protein 2A, results from partial cleavage by NS3. Specific enzymatic cleavages in vivo yield mature proteins peptide 2K acts as a signal sequence and is removed from the N-terminus of NS4B by the host signal peptidase in the ER lumen. Signal cleavage at the 2K-4B site requires a prior NS3 protease-mediated cleavage at the 4A-2K site.</text>
</comment>
<comment type="PTM">
    <molecule>Protein prM</molecule>
    <text evidence="7">Cleaved in post-Golgi vesicles by a host furin, releasing the mature small envelope protein M, and peptide pr. This cleavage is incomplete as up to 30% of viral particles still carry uncleaved prM.</text>
</comment>
<comment type="PTM">
    <molecule>Envelope protein E</molecule>
    <text evidence="7">N-glycosylated.</text>
</comment>
<comment type="PTM">
    <molecule>Non-structural protein 1</molecule>
    <text evidence="7">N-glycosylated. The excreted form is glycosylated and this is required for efficient secretion of the protein from infected cells.</text>
</comment>
<comment type="PTM">
    <text evidence="2">Polyubiquitinated; ubiquitination is probably mediated by host TRIM23 and is prerequisite for NS5-STAT2 interaction. NS5 is not ISGylated or sumoylated.</text>
</comment>
<comment type="PTM">
    <molecule>RNA-directed RNA polymerase NS5</molecule>
    <text evidence="7">Phosphorylated on serines residues. This phosphorylation may trigger NS5 nuclear localization.</text>
</comment>
<comment type="similarity">
    <text evidence="17">In the N-terminal section; belongs to the class I-like SAM-binding methyltransferase superfamily. mRNA cap 0-1 NS5-type methyltransferase family.</text>
</comment>
<proteinExistence type="inferred from homology"/>
<feature type="chain" id="PRO_0000441439" description="Genome polyprotein">
    <location>
        <begin position="1"/>
        <end position="3393"/>
    </location>
</feature>
<feature type="chain" id="PRO_0000441440" description="Capsid protein C" evidence="2">
    <location>
        <begin position="1"/>
        <end position="90"/>
    </location>
</feature>
<feature type="propeptide" id="PRO_0000441441" description="ER anchor for the capsid protein C, removed in mature form by serine protease NS3" evidence="2">
    <location>
        <begin position="91"/>
        <end position="108"/>
    </location>
</feature>
<feature type="chain" id="PRO_0000441442" description="Protein prM" evidence="8">
    <location>
        <begin position="109"/>
        <end position="272"/>
    </location>
</feature>
<feature type="chain" id="PRO_0000441443" description="Peptide pr" evidence="8">
    <location>
        <begin position="109"/>
        <end position="197"/>
    </location>
</feature>
<feature type="chain" id="PRO_0000441444" description="Small envelope protein M" evidence="8">
    <location>
        <begin position="198"/>
        <end position="272"/>
    </location>
</feature>
<feature type="chain" id="PRO_0000441445" description="Envelope protein E" evidence="8">
    <location>
        <begin position="273"/>
        <end position="763"/>
    </location>
</feature>
<feature type="chain" id="PRO_0000441446" description="Non-structural protein 1" evidence="2">
    <location>
        <begin position="764"/>
        <end position="1115"/>
    </location>
</feature>
<feature type="chain" id="PRO_0000441447" description="Non-structural protein 2A" evidence="2">
    <location>
        <begin position="1116"/>
        <end position="1340"/>
    </location>
</feature>
<feature type="chain" id="PRO_0000441448" description="Non-structural protein 2A-alpha" evidence="8">
    <location>
        <begin position="1116"/>
        <end position="1306"/>
    </location>
</feature>
<feature type="chain" id="PRO_0000441449" description="Serine protease subunit NS2B" evidence="2">
    <location>
        <begin position="1341"/>
        <end position="1469"/>
    </location>
</feature>
<feature type="chain" id="PRO_0000441450" description="Serine protease NS3" evidence="2">
    <location>
        <begin position="1470"/>
        <end position="2089"/>
    </location>
</feature>
<feature type="chain" id="PRO_0000441451" description="Non-structural protein 4A" evidence="2">
    <location>
        <begin position="2090"/>
        <end position="2213"/>
    </location>
</feature>
<feature type="peptide" id="PRO_0000441452" description="Peptide 2k" evidence="2">
    <location>
        <begin position="2214"/>
        <end position="2236"/>
    </location>
</feature>
<feature type="chain" id="PRO_0000441453" description="Non-structural protein 4B" evidence="2">
    <location>
        <begin position="2237"/>
        <end position="2488"/>
    </location>
</feature>
<feature type="chain" id="PRO_0000441454" description="RNA-directed RNA polymerase NS5" evidence="2">
    <location>
        <begin position="2489"/>
        <end position="3393"/>
    </location>
</feature>
<feature type="topological domain" description="Cytoplasmic" evidence="11">
    <location>
        <begin position="1"/>
        <end position="91"/>
    </location>
</feature>
<feature type="transmembrane region" description="Helical" evidence="11">
    <location>
        <begin position="92"/>
        <end position="112"/>
    </location>
</feature>
<feature type="topological domain" description="Extracellular" evidence="11">
    <location>
        <begin position="113"/>
        <end position="231"/>
    </location>
</feature>
<feature type="transmembrane region" description="Helical" evidence="11">
    <location>
        <begin position="232"/>
        <end position="252"/>
    </location>
</feature>
<feature type="topological domain" description="Cytoplasmic" evidence="11">
    <location>
        <begin position="253"/>
        <end position="257"/>
    </location>
</feature>
<feature type="transmembrane region" description="Helical" evidence="18">
    <location>
        <begin position="258"/>
        <end position="272"/>
    </location>
</feature>
<feature type="topological domain" description="Extracellular" evidence="11">
    <location>
        <begin position="273"/>
        <end position="713"/>
    </location>
</feature>
<feature type="transmembrane region" description="Helical" evidence="11">
    <location>
        <begin position="714"/>
        <end position="734"/>
    </location>
</feature>
<feature type="topological domain" description="Cytoplasmic" evidence="11">
    <location>
        <begin position="735"/>
        <end position="745"/>
    </location>
</feature>
<feature type="transmembrane region" description="Helical" evidence="18">
    <location>
        <begin position="746"/>
        <end position="763"/>
    </location>
</feature>
<feature type="topological domain" description="Extracellular" evidence="11">
    <location>
        <begin position="764"/>
        <end position="1112"/>
    </location>
</feature>
<feature type="transmembrane region" description="Helical" evidence="11">
    <location>
        <begin position="1113"/>
        <end position="1133"/>
    </location>
</feature>
<feature type="topological domain" description="Cytoplasmic" evidence="11">
    <location>
        <begin position="1134"/>
        <end position="1186"/>
    </location>
</feature>
<feature type="transmembrane region" description="Helical" evidence="11">
    <location>
        <begin position="1187"/>
        <end position="1207"/>
    </location>
</feature>
<feature type="topological domain" description="Lumenal" evidence="11">
    <location>
        <begin position="1208"/>
        <end position="1283"/>
    </location>
</feature>
<feature type="transmembrane region" description="Helical" evidence="11">
    <location>
        <begin position="1284"/>
        <end position="1304"/>
    </location>
</feature>
<feature type="topological domain" description="Cytoplasmic" evidence="11">
    <location>
        <begin position="1305"/>
        <end position="1341"/>
    </location>
</feature>
<feature type="transmembrane region" description="Helical" evidence="11">
    <location>
        <begin position="1342"/>
        <end position="1362"/>
    </location>
</feature>
<feature type="topological domain" description="Lumenal" evidence="11">
    <location>
        <begin position="1363"/>
        <end position="1365"/>
    </location>
</feature>
<feature type="transmembrane region" description="Helical" evidence="11">
    <location>
        <begin position="1366"/>
        <end position="1386"/>
    </location>
</feature>
<feature type="topological domain" description="Cytoplasmic" evidence="11">
    <location>
        <begin position="1387"/>
        <end position="1438"/>
    </location>
</feature>
<feature type="intramembrane region" description="Helical" evidence="11">
    <location>
        <begin position="1439"/>
        <end position="1459"/>
    </location>
</feature>
<feature type="topological domain" description="Cytoplasmic" evidence="11">
    <location>
        <begin position="1460"/>
        <end position="2137"/>
    </location>
</feature>
<feature type="transmembrane region" description="Helical" evidence="11">
    <location>
        <begin position="2138"/>
        <end position="2158"/>
    </location>
</feature>
<feature type="topological domain" description="Lumenal" evidence="11">
    <location>
        <begin position="2159"/>
        <end position="2168"/>
    </location>
</feature>
<feature type="intramembrane region" description="Helical" evidence="18">
    <location>
        <begin position="2169"/>
        <end position="2184"/>
    </location>
</feature>
<feature type="topological domain" description="Lumenal" evidence="11">
    <location>
        <position position="2185"/>
    </location>
</feature>
<feature type="transmembrane region" description="Helical" evidence="11">
    <location>
        <begin position="2186"/>
        <end position="2206"/>
    </location>
</feature>
<feature type="topological domain" description="Cytoplasmic" evidence="11">
    <location>
        <begin position="2207"/>
        <end position="2221"/>
    </location>
</feature>
<feature type="transmembrane region" description="Helical; Note=Signal for NS4B" evidence="18">
    <location>
        <begin position="2222"/>
        <end position="2236"/>
    </location>
</feature>
<feature type="topological domain" description="Lumenal" evidence="11">
    <location>
        <begin position="2237"/>
        <end position="2275"/>
    </location>
</feature>
<feature type="intramembrane region" description="Helical" evidence="11">
    <location>
        <begin position="2276"/>
        <end position="2296"/>
    </location>
</feature>
<feature type="topological domain" description="Lumenal" evidence="11">
    <location>
        <begin position="2297"/>
        <end position="2344"/>
    </location>
</feature>
<feature type="transmembrane region" description="Helical" evidence="11">
    <location>
        <begin position="2345"/>
        <end position="2365"/>
    </location>
</feature>
<feature type="topological domain" description="Cytoplasmic" evidence="11">
    <location>
        <begin position="2366"/>
        <end position="2408"/>
    </location>
</feature>
<feature type="transmembrane region" description="Helical" evidence="11">
    <location>
        <begin position="2409"/>
        <end position="2429"/>
    </location>
</feature>
<feature type="topological domain" description="Lumenal" evidence="11">
    <location>
        <begin position="2430"/>
        <end position="2457"/>
    </location>
</feature>
<feature type="transmembrane region" description="Helical" evidence="11">
    <location>
        <begin position="2458"/>
        <end position="2478"/>
    </location>
</feature>
<feature type="topological domain" description="Cytoplasmic" evidence="11">
    <location>
        <begin position="2479"/>
        <end position="3393"/>
    </location>
</feature>
<feature type="domain" description="Peptidase S7" evidence="16">
    <location>
        <begin position="1470"/>
        <end position="1649"/>
    </location>
</feature>
<feature type="domain" description="Helicase ATP-binding" evidence="13">
    <location>
        <begin position="1653"/>
        <end position="1809"/>
    </location>
</feature>
<feature type="domain" description="Helicase C-terminal" evidence="14">
    <location>
        <begin position="1804"/>
        <end position="1984"/>
    </location>
</feature>
<feature type="domain" description="mRNA cap 0-1 NS5-type MT" evidence="17">
    <location>
        <begin position="2489"/>
        <end position="2753"/>
    </location>
</feature>
<feature type="domain" description="RdRp catalytic" evidence="12">
    <location>
        <begin position="3017"/>
        <end position="3169"/>
    </location>
</feature>
<feature type="region of interest" description="Hydrophobic; homodimerization of capsid protein C" evidence="8">
    <location>
        <begin position="28"/>
        <end position="60"/>
    </location>
</feature>
<feature type="region of interest" description="Fusion peptide" evidence="5">
    <location>
        <begin position="370"/>
        <end position="383"/>
    </location>
</feature>
<feature type="region of interest" description="Interacts with and activates NS3 protease" evidence="15">
    <location>
        <begin position="1393"/>
        <end position="1432"/>
    </location>
</feature>
<feature type="region of interest" description="Important for RNA-binding" evidence="6">
    <location>
        <begin position="1657"/>
        <end position="1660"/>
    </location>
</feature>
<feature type="short sequence motif" description="DEAH box" evidence="13">
    <location>
        <begin position="1757"/>
        <end position="1760"/>
    </location>
</feature>
<feature type="short sequence motif" description="Nuclear localization signal" evidence="1">
    <location>
        <begin position="2860"/>
        <end position="2893"/>
    </location>
</feature>
<feature type="active site" description="Charge relay system; for serine protease NS3 activity" evidence="16">
    <location>
        <position position="1521"/>
    </location>
</feature>
<feature type="active site" description="Charge relay system; for serine protease NS3 activity" evidence="16">
    <location>
        <position position="1545"/>
    </location>
</feature>
<feature type="active site" description="Charge relay system; for serine protease NS3 activity" evidence="16">
    <location>
        <position position="1606"/>
    </location>
</feature>
<feature type="active site" description="For 2'-O-MTase activity" evidence="9">
    <location>
        <position position="2549"/>
    </location>
</feature>
<feature type="active site" description="For 2'-O-MTase activity" evidence="9">
    <location>
        <position position="2634"/>
    </location>
</feature>
<feature type="active site" description="For 2'-O-MTase activity" evidence="9">
    <location>
        <position position="2670"/>
    </location>
</feature>
<feature type="active site" description="For 2'-O-MTase activity" evidence="9">
    <location>
        <position position="2706"/>
    </location>
</feature>
<feature type="binding site" evidence="13">
    <location>
        <begin position="1666"/>
        <end position="1673"/>
    </location>
    <ligand>
        <name>ATP</name>
        <dbReference type="ChEBI" id="CHEBI:30616"/>
    </ligand>
</feature>
<feature type="binding site" evidence="17">
    <location>
        <position position="2544"/>
    </location>
    <ligand>
        <name>S-adenosyl-L-methionine</name>
        <dbReference type="ChEBI" id="CHEBI:59789"/>
    </ligand>
</feature>
<feature type="binding site" evidence="17">
    <location>
        <position position="2574"/>
    </location>
    <ligand>
        <name>S-adenosyl-L-methionine</name>
        <dbReference type="ChEBI" id="CHEBI:59789"/>
    </ligand>
</feature>
<feature type="binding site" evidence="17">
    <location>
        <position position="2575"/>
    </location>
    <ligand>
        <name>S-adenosyl-L-methionine</name>
        <dbReference type="ChEBI" id="CHEBI:59789"/>
    </ligand>
</feature>
<feature type="binding site" evidence="17">
    <location>
        <position position="2592"/>
    </location>
    <ligand>
        <name>S-adenosyl-L-methionine</name>
        <dbReference type="ChEBI" id="CHEBI:59789"/>
    </ligand>
</feature>
<feature type="binding site" evidence="17">
    <location>
        <position position="2593"/>
    </location>
    <ligand>
        <name>S-adenosyl-L-methionine</name>
        <dbReference type="ChEBI" id="CHEBI:59789"/>
    </ligand>
</feature>
<feature type="binding site" evidence="17">
    <location>
        <position position="2619"/>
    </location>
    <ligand>
        <name>S-adenosyl-L-methionine</name>
        <dbReference type="ChEBI" id="CHEBI:59789"/>
    </ligand>
</feature>
<feature type="binding site" evidence="17">
    <location>
        <position position="2620"/>
    </location>
    <ligand>
        <name>S-adenosyl-L-methionine</name>
        <dbReference type="ChEBI" id="CHEBI:59789"/>
    </ligand>
</feature>
<feature type="binding site" evidence="17">
    <location>
        <position position="2635"/>
    </location>
    <ligand>
        <name>S-adenosyl-L-methionine</name>
        <dbReference type="ChEBI" id="CHEBI:59789"/>
    </ligand>
</feature>
<feature type="binding site" evidence="17">
    <location>
        <position position="2708"/>
    </location>
    <ligand>
        <name>S-adenosyl-L-methionine</name>
        <dbReference type="ChEBI" id="CHEBI:59789"/>
    </ligand>
</feature>
<feature type="binding site" evidence="4">
    <location>
        <position position="2927"/>
    </location>
    <ligand>
        <name>Zn(2+)</name>
        <dbReference type="ChEBI" id="CHEBI:29105"/>
        <label>1</label>
    </ligand>
</feature>
<feature type="binding site" evidence="4">
    <location>
        <position position="2931"/>
    </location>
    <ligand>
        <name>Zn(2+)</name>
        <dbReference type="ChEBI" id="CHEBI:29105"/>
        <label>1</label>
    </ligand>
</feature>
<feature type="binding site" evidence="4">
    <location>
        <position position="2936"/>
    </location>
    <ligand>
        <name>Zn(2+)</name>
        <dbReference type="ChEBI" id="CHEBI:29105"/>
        <label>1</label>
    </ligand>
</feature>
<feature type="binding site" evidence="4">
    <location>
        <position position="2939"/>
    </location>
    <ligand>
        <name>Zn(2+)</name>
        <dbReference type="ChEBI" id="CHEBI:29105"/>
        <label>1</label>
    </ligand>
</feature>
<feature type="binding site" evidence="4">
    <location>
        <position position="3204"/>
    </location>
    <ligand>
        <name>Zn(2+)</name>
        <dbReference type="ChEBI" id="CHEBI:29105"/>
        <label>2</label>
    </ligand>
</feature>
<feature type="binding site" evidence="4">
    <location>
        <position position="3220"/>
    </location>
    <ligand>
        <name>Zn(2+)</name>
        <dbReference type="ChEBI" id="CHEBI:29105"/>
        <label>2</label>
    </ligand>
</feature>
<feature type="binding site" evidence="4">
    <location>
        <position position="3339"/>
    </location>
    <ligand>
        <name>Zn(2+)</name>
        <dbReference type="ChEBI" id="CHEBI:29105"/>
        <label>2</label>
    </ligand>
</feature>
<feature type="site" description="Cleavage; by viral protease NS3" evidence="3">
    <location>
        <begin position="90"/>
        <end position="91"/>
    </location>
</feature>
<feature type="site" description="Cleavage; by host signal peptidase" evidence="3">
    <location>
        <begin position="108"/>
        <end position="109"/>
    </location>
</feature>
<feature type="site" description="Cleavage; by host furin" evidence="3">
    <location>
        <begin position="197"/>
        <end position="198"/>
    </location>
</feature>
<feature type="site" description="Cleavage; by host signal peptidase" evidence="8">
    <location>
        <begin position="272"/>
        <end position="273"/>
    </location>
</feature>
<feature type="site" description="Cleavage; by host signal peptidase" evidence="3">
    <location>
        <begin position="763"/>
        <end position="764"/>
    </location>
</feature>
<feature type="site" description="Cleavage; by host" evidence="3">
    <location>
        <begin position="1115"/>
        <end position="1116"/>
    </location>
</feature>
<feature type="site" description="Cleavage; by viral protease NS3" evidence="3">
    <location>
        <begin position="1340"/>
        <end position="1341"/>
    </location>
</feature>
<feature type="site" description="Cleavage; by autolysis" evidence="3">
    <location>
        <begin position="1469"/>
        <end position="1470"/>
    </location>
</feature>
<feature type="site" description="Involved in NS3 ATPase and RTPase activities" evidence="4">
    <location>
        <position position="1927"/>
    </location>
</feature>
<feature type="site" description="Involved in NS3 ATPase and RTPase activities" evidence="4">
    <location>
        <position position="1930"/>
    </location>
</feature>
<feature type="site" description="Cleavage; by autolysis" evidence="3">
    <location>
        <begin position="2089"/>
        <end position="2090"/>
    </location>
</feature>
<feature type="site" description="Cleavage; by viral protease NS3" evidence="3">
    <location>
        <begin position="2213"/>
        <end position="2214"/>
    </location>
</feature>
<feature type="site" description="Cleavage; by host signal peptidase" evidence="3">
    <location>
        <begin position="2236"/>
        <end position="2237"/>
    </location>
</feature>
<feature type="site" description="Cleavage; by viral protease NS3" evidence="3">
    <location>
        <begin position="2488"/>
        <end position="2489"/>
    </location>
</feature>
<feature type="site" description="mRNA cap binding" evidence="17">
    <location>
        <position position="2501"/>
    </location>
</feature>
<feature type="site" description="mRNA cap binding; via carbonyl oxygen" evidence="17">
    <location>
        <position position="2504"/>
    </location>
</feature>
<feature type="site" description="mRNA cap binding" evidence="17">
    <location>
        <position position="2505"/>
    </location>
</feature>
<feature type="site" description="mRNA cap binding; via carbonyl oxygen" evidence="17">
    <location>
        <position position="2507"/>
    </location>
</feature>
<feature type="site" description="mRNA cap binding" evidence="17">
    <location>
        <position position="2512"/>
    </location>
</feature>
<feature type="site" description="mRNA cap binding" evidence="17">
    <location>
        <position position="2516"/>
    </location>
</feature>
<feature type="site" description="Essential for 2'-O-methyltransferase activity" evidence="17">
    <location>
        <position position="2549"/>
    </location>
</feature>
<feature type="site" description="Essential for 2'-O-methyltransferase and N-7 methyltransferase activity" evidence="17">
    <location>
        <position position="2634"/>
    </location>
</feature>
<feature type="site" description="mRNA cap binding" evidence="17">
    <location>
        <position position="2638"/>
    </location>
</feature>
<feature type="site" description="Essential for 2'-O-methyltransferase activity" evidence="17">
    <location>
        <position position="2670"/>
    </location>
</feature>
<feature type="site" description="mRNA cap binding" evidence="17">
    <location>
        <position position="2701"/>
    </location>
</feature>
<feature type="site" description="mRNA cap binding" evidence="17">
    <location>
        <position position="2703"/>
    </location>
</feature>
<feature type="site" description="Essential for 2'-O-methyltransferase activity" evidence="17">
    <location>
        <position position="2706"/>
    </location>
</feature>
<feature type="modified residue" description="Phosphoserine" evidence="2">
    <location>
        <position position="2544"/>
    </location>
</feature>
<feature type="glycosylation site" description="N-linked (GlcNAc...) asparagine; by host" evidence="11">
    <location>
        <position position="121"/>
    </location>
</feature>
<feature type="glycosylation site" description="N-linked (GlcNAc...) asparagine; by host" evidence="11">
    <location>
        <position position="137"/>
    </location>
</feature>
<feature type="glycosylation site" description="N-linked (GlcNAc...) asparagine; by host" evidence="11">
    <location>
        <position position="893"/>
    </location>
</feature>
<feature type="glycosylation site" description="N-linked (GlcNAc...) asparagine; by host" evidence="11">
    <location>
        <position position="970"/>
    </location>
</feature>
<feature type="disulfide bond" evidence="7">
    <location>
        <begin position="275"/>
        <end position="302"/>
    </location>
</feature>
<feature type="disulfide bond" evidence="7">
    <location>
        <begin position="346"/>
        <end position="377"/>
    </location>
</feature>
<feature type="disulfide bond" evidence="7">
    <location>
        <begin position="364"/>
        <end position="388"/>
    </location>
</feature>
<feature type="disulfide bond" evidence="7">
    <location>
        <begin position="453"/>
        <end position="553"/>
    </location>
</feature>
<feature type="disulfide bond" evidence="7">
    <location>
        <begin position="570"/>
        <end position="600"/>
    </location>
</feature>
<feature type="disulfide bond" evidence="7">
    <location>
        <begin position="767"/>
        <end position="778"/>
    </location>
</feature>
<feature type="disulfide bond" evidence="7">
    <location>
        <begin position="818"/>
        <end position="905"/>
    </location>
</feature>
<feature type="disulfide bond" evidence="7">
    <location>
        <begin position="941"/>
        <end position="986"/>
    </location>
</feature>
<feature type="disulfide bond" evidence="7">
    <location>
        <begin position="1043"/>
        <end position="1092"/>
    </location>
</feature>
<feature type="disulfide bond" evidence="7">
    <location>
        <begin position="1054"/>
        <end position="1076"/>
    </location>
</feature>
<feature type="disulfide bond" evidence="10">
    <location>
        <begin position="1054"/>
        <end position="1075"/>
    </location>
</feature>
<feature type="disulfide bond" evidence="7">
    <location>
        <begin position="1075"/>
        <end position="1079"/>
    </location>
</feature>
<feature type="disulfide bond" evidence="10">
    <location>
        <begin position="1076"/>
        <end position="1079"/>
    </location>
</feature>
<evidence type="ECO:0000250" key="1"/>
<evidence type="ECO:0000250" key="2">
    <source>
        <dbReference type="UniProtKB" id="P03314"/>
    </source>
</evidence>
<evidence type="ECO:0000250" key="3">
    <source>
        <dbReference type="UniProtKB" id="P06935"/>
    </source>
</evidence>
<evidence type="ECO:0000250" key="4">
    <source>
        <dbReference type="UniProtKB" id="P14335"/>
    </source>
</evidence>
<evidence type="ECO:0000250" key="5">
    <source>
        <dbReference type="UniProtKB" id="P14336"/>
    </source>
</evidence>
<evidence type="ECO:0000250" key="6">
    <source>
        <dbReference type="UniProtKB" id="P14340"/>
    </source>
</evidence>
<evidence type="ECO:0000250" key="7">
    <source>
        <dbReference type="UniProtKB" id="P17763"/>
    </source>
</evidence>
<evidence type="ECO:0000250" key="8">
    <source>
        <dbReference type="UniProtKB" id="P29990"/>
    </source>
</evidence>
<evidence type="ECO:0000250" key="9">
    <source>
        <dbReference type="UniProtKB" id="Q6YMS4"/>
    </source>
</evidence>
<evidence type="ECO:0000250" key="10">
    <source>
        <dbReference type="UniProtKB" id="Q9Q6P4"/>
    </source>
</evidence>
<evidence type="ECO:0000255" key="11"/>
<evidence type="ECO:0000255" key="12">
    <source>
        <dbReference type="PROSITE-ProRule" id="PRU00539"/>
    </source>
</evidence>
<evidence type="ECO:0000255" key="13">
    <source>
        <dbReference type="PROSITE-ProRule" id="PRU00541"/>
    </source>
</evidence>
<evidence type="ECO:0000255" key="14">
    <source>
        <dbReference type="PROSITE-ProRule" id="PRU00542"/>
    </source>
</evidence>
<evidence type="ECO:0000255" key="15">
    <source>
        <dbReference type="PROSITE-ProRule" id="PRU00859"/>
    </source>
</evidence>
<evidence type="ECO:0000255" key="16">
    <source>
        <dbReference type="PROSITE-ProRule" id="PRU00860"/>
    </source>
</evidence>
<evidence type="ECO:0000255" key="17">
    <source>
        <dbReference type="PROSITE-ProRule" id="PRU00924"/>
    </source>
</evidence>
<evidence type="ECO:0000305" key="18"/>
<evidence type="ECO:0000312" key="19">
    <source>
        <dbReference type="EMBL" id="ABI54472.1"/>
    </source>
</evidence>
<protein>
    <recommendedName>
        <fullName>Genome polyprotein</fullName>
    </recommendedName>
    <component>
        <recommendedName>
            <fullName>Capsid protein C</fullName>
        </recommendedName>
        <alternativeName>
            <fullName>Core protein</fullName>
        </alternativeName>
    </component>
    <component>
        <recommendedName>
            <fullName>Protein prM</fullName>
        </recommendedName>
    </component>
    <component>
        <recommendedName>
            <fullName>Peptide pr</fullName>
        </recommendedName>
    </component>
    <component>
        <recommendedName>
            <fullName>Small envelope protein M</fullName>
        </recommendedName>
        <alternativeName>
            <fullName>Matrix protein</fullName>
        </alternativeName>
    </component>
    <component>
        <recommendedName>
            <fullName>Envelope protein E</fullName>
        </recommendedName>
    </component>
    <component>
        <recommendedName>
            <fullName>Non-structural protein 1</fullName>
            <shortName>NS1</shortName>
        </recommendedName>
    </component>
    <component>
        <recommendedName>
            <fullName>Non-structural protein 2A</fullName>
            <shortName>NS2A</shortName>
        </recommendedName>
    </component>
    <component>
        <recommendedName>
            <fullName>Non-structural protein 2A-alpha</fullName>
            <shortName>NS2A-alpha</shortName>
        </recommendedName>
    </component>
    <component>
        <recommendedName>
            <fullName>Serine protease subunit NS2B</fullName>
        </recommendedName>
        <alternativeName>
            <fullName>Flavivirin protease NS2B regulatory subunit</fullName>
        </alternativeName>
        <alternativeName>
            <fullName>Non-structural protein 2B</fullName>
        </alternativeName>
    </component>
    <component>
        <recommendedName>
            <fullName>Serine protease NS3</fullName>
            <ecNumber>3.4.21.91</ecNumber>
            <ecNumber>3.6.1.15</ecNumber>
            <ecNumber>3.6.4.13</ecNumber>
        </recommendedName>
        <alternativeName>
            <fullName>Flavivirin protease NS3 catalytic subunit</fullName>
        </alternativeName>
        <alternativeName>
            <fullName>Non-structural protein 3</fullName>
        </alternativeName>
    </component>
    <component>
        <recommendedName>
            <fullName>Non-structural protein 4A</fullName>
            <shortName>NS4A</shortName>
        </recommendedName>
    </component>
    <component>
        <recommendedName>
            <fullName>Peptide 2k</fullName>
        </recommendedName>
    </component>
    <component>
        <recommendedName>
            <fullName>Non-structural protein 4B</fullName>
            <shortName>NS4B</shortName>
        </recommendedName>
    </component>
    <component>
        <recommendedName>
            <fullName>RNA-directed RNA polymerase NS5</fullName>
            <ecNumber evidence="17">2.1.1.56</ecNumber>
            <ecNumber evidence="17">2.1.1.57</ecNumber>
            <ecNumber evidence="12">2.7.7.48</ecNumber>
        </recommendedName>
        <alternativeName>
            <fullName>Non-structural protein 5</fullName>
        </alternativeName>
    </component>
</protein>
<reference key="1">
    <citation type="journal article" date="2010" name="J. Gen. Virol.">
        <title>Genomics and evolution of Aedes-borne flaviviruses.</title>
        <authorList>
            <person name="Grard G."/>
            <person name="Moureau G."/>
            <person name="Charrel R.N."/>
            <person name="Holmes E.C."/>
            <person name="Gould E.A."/>
            <person name="de Lamballerie X."/>
        </authorList>
    </citation>
    <scope>NUCLEOTIDE SEQUENCE [LARGE SCALE GENOMIC RNA]</scope>
    <source>
        <strain evidence="19">SAH 336</strain>
    </source>
</reference>
<sequence length="3393" mass="375607">MVNPKGVNVMAARVKRAAQKTKKKAVQVSRGLRGFVLFVLTQLFMGRKLTPNVRRLWKSSDKNSLIHVLTKIKKIVGNLLMGVSRRKKRRSATTSGTVFMAMLGLTLAASVARHAHHTLINITKDDAHKLLTLRNGNCTVVATDIGNWCPDNVEYDCVTLQDNEDPDDVDCWCYRVNNVRVTYGRCKDGNTPRRSKRAVVITAHLDQGLTTKKETWLGSSHFETQVQKVEKWIIRNPTYAIAAILMSWYIGNSLKQRVVLLLLTLALGPAYATHCVGIPKRDFVQGVQGTTWVNLVLEQGGCVTIMAEGKPSVDVWMDNIKFTSPTLVRRISHTATISDTKIATACPSNGEAKLDEEHIKEYACKRLYSDRGWGNGCGLFGKGSLVACAKYESTGHMDVYEMDMTKVEYTVKTQVHSGAKSGDLSGVKTVSFAPTSGSQPVEFSGYGNMGLQCMIQSNVDFSTHYLVVMGNDAWLVHKAWVEDITLPWKHGEGGTWKDKQYMVEFGEPHATTVKVLALGPQEGALRNALAGAMIVTYESSGKTFKLHGGHVTCKATVSGLALKGTTYTNCRGGLSFVKTPTDTGHGTVVMQVKVAKSAPCRLTAIAADDASGHVNRGTLVTSNPIAASNNDEVMIEINPPYGTSYLIVGVGDDKLVYQWKKSGSTIGSLFSETVKGAQRMAIVGSSSWDFSSTSGFFSSVGKAIHTVFGTAFHGIFGGLSWMTRILIGVLLVWLGLNSRNGTATTLMMLTGFIILFLSLGVGAEVGCSVNWGQKELKCGDGIFVYNDVDDWMHKYKYHPEDPKVMAGLIAKAWEKGACGLTSVSELEHVMWVKIASEINAILEENEIDLTVVVHENKSVYRRGSRRFPRVETELTYGWESWGKNFITDGKVSNNTFHVDGKEDQCASKNRVWNSLEIEEFGFGVFHTNVFLRQKADKTNSCDTTLMGAAVKGNVAAHADPGFWMESQENNGTWEIQSIEFTAYRECEWPVSHTVHGTQVMESDMFMPKGIGGPVSHLNRMQGYKVQTNGAWAYGKTVVQRELCPDTSVVVDSSCSDRGKSIRSTTTEGKVIKEWCCRSCTLPPVSYWTSEGCWYAMEVRPMKTPEKHLVRSWVTAGDSYPAWSIGLVAMFLFVDIMARSRPTRKMMIGGTMLLLAIMIMGELSYLDLLRYIIVVGEHFIERENGGDVAYMAIMAASHLRPGLMAMVFAKSMWSPKQRVLLALGCAILQPFLTAQASALVWEWADSIGLVLLIVQGMVRNKEKNWALVLLALCSPVSMPVIRKASMIIGTGGLLLSLWKGGGSSMRKGLPLFAASAARVLGLTKAHLSVLFILLITKNGKRTWPISECLAAVGIFGAAFGTMFSEDETLLGPLALVGVVLIVYTMFTQSDGLELVKAADISWSDEAVVSGEARRFDVALNDSGEFKLLDEPPVSWLNVSFLVVAIVASSLHPIALVVTLVAWTYWRTEKRSGVLWDVPLAPKVEACEHLEDGVFRIIQKGLFGSSQVGIGVAKDGVFHTMWHVTRGAFLMHSGKQLTPTWGSVRKDLVCYGGTWKLDGAWNGVDEVQLIAVPPGKPATNVQTKPGTFVLPTGDEAGAVLLDFPSGTSGSPIIDRHGNILGLYGNGIVLENGAYASAISQAQPGSVAEVETPGLDKMLRKGEFTMLDYHPGAGKTRKHLPNILKECERKRLRTLVLAPTRVVLSEMKEALTSVQAKFHTQAFNSTTTGREIIDVMCHATFVHRMLEGLRSGNWEVIIMDEAHFLDPTSIAARGWAHHKSKTKESAVIFMTATPPGTSNEFPESNAEIEDVKKEIPSEPWSKGHEWILEDRRPTVWFLPSIKAANVMAACLRKAERSVVVLNRSTFENVYPTIKTKKPDFILATDIAEMGANLPVERVIDCRTAYKPVLVDERVALKGPLRIAAAAAAQRRGRVGRNPDRDGDTYVYSEDTCEQNDHLVCWTEGSMLLDNMQVKGGFVAPLYEEEASKTTMTPGECRLRDDQRKVFRTLIRKHDMPVWLSWQVAKSGLAADDRKWCFDGEDDNAILGDNGEVIKARSPGGQRKELKPRWSDARIASDNTSLMNFIAFAEGRRSLPLSILWSVPNQLSEKLVQSIDTLTILLRSEEGSRAHKLALQQAPEAVSTLLLLGMMAICTLGLVILLMKPKATDKMSMAMVTMAITGYLLKLGGMTHAQVGGILLVFFIMMVVIIPESGTQRSINDNKLAYVIILVGLVIGGVACNELGWLEKTKADLFGNNMTHAQTVVLPTINWNWLDFRPGAAWSLYVGMATFLTPVFVHWIKNEYGNASLTGITPTAGILGALNQGVPFVKLNTSVGVLLLSVWNNFTTSSMLAAMVMLACHCLFVLPGVRAQCLREAQIRVFHGVAKNPMVDGNPTVDLEKENDMPDLYEKKLALVALGMAAVLNAAMVRTALTTAEMVVLGSAAVGPLLEGNTSAFWNGPLAVAVAGVMRGNHYALIGIVYNLWLLKTARRGGSSALTYGEVWKRQLNLLGKQEFMNYKVSDILEVDRSHAREVLNSGNDAVGVAVSRGSSKLNWLIERGYLRPTGRVVDLGCGRGGWSYTCAAERQVTSVKAYTLGKEGHEKPRLIQSLGWNIIKFKDKSDITRMTPHASDTLLCDIGESSSNPEVEKERTLRVIEAVEKWMSPTTVSFCFKVLAPYKPDVIEALERFQLKHGGGIIRNPYSRNSTHEMYYVSGVRNNILHMVNSTSRMLMRRMSRPSGRSTVVPDLIYPTGTRSVASEAGPLDLEKVKARINRLKEEQESTWFVDSDHPYRTWHYHGSYVAKQSGTAASMINGVVKLLSGPWDRIEEVTNMAMTDTTPFGQQRVFKEKVDTRAPEPPQGTREIMKVVNQWLFDYLGRTKQPRICTKEEFINKVRSHAALGGILTEQEGWSSAAEAVADPRFWSLVDKERQAHLEGRCETCIYNMMGKREKKPSEFGRAKGSRAIWYMWLGARFLEFEALGFLNEDHWLGRENSKAGVEGIGLQYLGYVVEEVARKGNGLVYADDTAGWDTRITEADLEDEQYIMKRMSAEHRQLAWAVMELTYRNKVVKVPRPGPGGKILMDVISRRDQRGSGQVVTYPLNTATNMKVQLIRMAEAENVITRNDVEKVSLITLKELQLWLEVNGVNRLERMAVSGDDCIVAPVDESFAGALHHLNAMSKTRKDISEWENSRGWTDWESVPFCSHHFHTLYLKDGRTIIAPCRCQDELIGRARISPGNGWMIKETAGLSKAYTQMWTLMYFHRRDLRLMANAICSAVPIDWVPTGRTTWSIHATGEWMSSDDMLEVWNKVWIQDNPHVKDKTPIFAWRDVPYIQKGQDRACGSLVGTSLRASWAESIMTSVHRVRMLIGNERYVNYMESMDRYATQRCSAYGELL</sequence>
<accession>C8XPA8</accession>
<organismHost>
    <name type="scientific">Culicidae</name>
    <name type="common">mosquitos</name>
    <dbReference type="NCBI Taxonomy" id="7157"/>
</organismHost>
<organismHost>
    <name type="scientific">Homo sapiens</name>
    <name type="common">Human</name>
    <dbReference type="NCBI Taxonomy" id="9606"/>
</organismHost>
<organismHost>
    <name type="scientific">Rodentia</name>
    <dbReference type="NCBI Taxonomy" id="9989"/>
</organismHost>